<reference key="1">
    <citation type="journal article" date="1992" name="Nature">
        <title>A protein of the endoplasmic reticulum involved early in polypeptide translocation.</title>
        <authorList>
            <person name="Goerlich D."/>
            <person name="Hartmann E."/>
            <person name="Prehn S."/>
            <person name="Rapoport T.A."/>
        </authorList>
    </citation>
    <scope>NUCLEOTIDE SEQUENCE [MRNA]</scope>
    <scope>PROTEIN SEQUENCE OF 2-27 AND 165-185</scope>
    <scope>FUNCTION</scope>
    <scope>SUBCELLULAR LOCATION</scope>
    <source>
        <strain>Cocker spaniel</strain>
        <tissue>Kidney</tissue>
    </source>
</reference>
<dbReference type="EMBL" id="X63678">
    <property type="protein sequence ID" value="CAA45217.1"/>
    <property type="molecule type" value="mRNA"/>
</dbReference>
<dbReference type="PIR" id="S21736">
    <property type="entry name" value="S21736"/>
</dbReference>
<dbReference type="RefSeq" id="NP_001003267.1">
    <property type="nucleotide sequence ID" value="NM_001003267.1"/>
</dbReference>
<dbReference type="SMR" id="Q01685"/>
<dbReference type="FunCoup" id="Q01685">
    <property type="interactions" value="745"/>
</dbReference>
<dbReference type="STRING" id="9615.ENSCAFP00000052565"/>
<dbReference type="GlyCosmos" id="Q01685">
    <property type="glycosylation" value="1 site, No reported glycans"/>
</dbReference>
<dbReference type="PaxDb" id="9612-ENSCAFP00000011621"/>
<dbReference type="Ensembl" id="ENSCAFT00000082516.2">
    <property type="protein sequence ID" value="ENSCAFP00000052565.2"/>
    <property type="gene ID" value="ENSCAFG00000007866.5"/>
</dbReference>
<dbReference type="Ensembl" id="ENSCAFT00030016091.1">
    <property type="protein sequence ID" value="ENSCAFP00030014043.1"/>
    <property type="gene ID" value="ENSCAFG00030008666.1"/>
</dbReference>
<dbReference type="Ensembl" id="ENSCAFT00845046178.1">
    <property type="protein sequence ID" value="ENSCAFP00845036259.1"/>
    <property type="gene ID" value="ENSCAFG00845026170.1"/>
</dbReference>
<dbReference type="GeneID" id="403948"/>
<dbReference type="KEGG" id="cfa:403948"/>
<dbReference type="CTD" id="23471"/>
<dbReference type="VEuPathDB" id="HostDB:ENSCAFG00845026170"/>
<dbReference type="VGNC" id="VGNC:54123">
    <property type="gene designation" value="TRAM1"/>
</dbReference>
<dbReference type="eggNOG" id="KOG1608">
    <property type="taxonomic scope" value="Eukaryota"/>
</dbReference>
<dbReference type="GeneTree" id="ENSGT00510000046470"/>
<dbReference type="InParanoid" id="Q01685"/>
<dbReference type="OrthoDB" id="3053196at2759"/>
<dbReference type="Proteomes" id="UP000002254">
    <property type="component" value="Chromosome 29"/>
</dbReference>
<dbReference type="Proteomes" id="UP000694429">
    <property type="component" value="Chromosome 29"/>
</dbReference>
<dbReference type="Proteomes" id="UP000694542">
    <property type="component" value="Unplaced"/>
</dbReference>
<dbReference type="Proteomes" id="UP000805418">
    <property type="component" value="Chromosome 29"/>
</dbReference>
<dbReference type="GO" id="GO:0005789">
    <property type="term" value="C:endoplasmic reticulum membrane"/>
    <property type="evidence" value="ECO:0000250"/>
    <property type="project" value="UniProtKB"/>
</dbReference>
<dbReference type="GO" id="GO:0045048">
    <property type="term" value="P:protein insertion into ER membrane"/>
    <property type="evidence" value="ECO:0000250"/>
    <property type="project" value="UniProtKB"/>
</dbReference>
<dbReference type="GO" id="GO:0006986">
    <property type="term" value="P:response to unfolded protein"/>
    <property type="evidence" value="ECO:0000250"/>
    <property type="project" value="UniProtKB"/>
</dbReference>
<dbReference type="GO" id="GO:0006616">
    <property type="term" value="P:SRP-dependent cotranslational protein targeting to membrane, translocation"/>
    <property type="evidence" value="ECO:0000314"/>
    <property type="project" value="WormBase"/>
</dbReference>
<dbReference type="InterPro" id="IPR006634">
    <property type="entry name" value="TLC-dom"/>
</dbReference>
<dbReference type="InterPro" id="IPR016447">
    <property type="entry name" value="Translocation_assoc_membrane"/>
</dbReference>
<dbReference type="PANTHER" id="PTHR12371:SF3">
    <property type="entry name" value="TRANSLOCATING CHAIN-ASSOCIATED MEMBRANE PROTEIN 1"/>
    <property type="match status" value="1"/>
</dbReference>
<dbReference type="PANTHER" id="PTHR12371">
    <property type="entry name" value="TRANSLOCATION ASSOCIATED MEMBRANE PROTEIN"/>
    <property type="match status" value="1"/>
</dbReference>
<dbReference type="Pfam" id="PF03798">
    <property type="entry name" value="TRAM_LAG1_CLN8"/>
    <property type="match status" value="1"/>
</dbReference>
<dbReference type="PIRSF" id="PIRSF005449">
    <property type="entry name" value="Translocation_assoc_membrane"/>
    <property type="match status" value="1"/>
</dbReference>
<dbReference type="SMART" id="SM00724">
    <property type="entry name" value="TLC"/>
    <property type="match status" value="1"/>
</dbReference>
<dbReference type="PROSITE" id="PS50922">
    <property type="entry name" value="TLC"/>
    <property type="match status" value="1"/>
</dbReference>
<comment type="function">
    <text evidence="1 6">Involved in the translocation of nascent protein chains into or through the endoplasmic reticulum (ER) membrane by facilitating the proper chain positioning at the SEC61 channel (PubMed:1315422). Regulates the exposure of nascent secretory protein chain to the cytosol during translocation into the ER. May affect the phospholipid bilayer in the vicinity of the lateral gate of the SEC61 channel, thereby facilitating ER protein transport. Intimately associates with transmembrane (TM) domain of nascent membrane proteins during the entire integration process into the ER membrane. Associates with the second TM domain of G-protein-coupled receptor opsin/OPSD nascent chain in the ER membrane, which may facilitate its integration into the membrane. Under conditions of ER stress, participates in the disposal of misfolded ER membrane proteins during the unfolded protein response (UPR), an integrated stress response (ISR) pathway, by selectively retrotranslocating misfolded ER-membrane proteins from the ER into the cytosol where they are ubiquitinated and degraded by the proteasome (By similarity).</text>
</comment>
<comment type="subunit">
    <text evidence="1">Interacts with SEC61B. May interact with Derlin-1/DERL1.</text>
</comment>
<comment type="subcellular location">
    <subcellularLocation>
        <location evidence="6">Endoplasmic reticulum membrane</location>
        <topology evidence="3">Multi-pass membrane protein</topology>
    </subcellularLocation>
</comment>
<comment type="PTM">
    <text evidence="1">N-glycosylated.</text>
</comment>
<comment type="similarity">
    <text evidence="8">Belongs to the TRAM family.</text>
</comment>
<evidence type="ECO:0000250" key="1">
    <source>
        <dbReference type="UniProtKB" id="Q15629"/>
    </source>
</evidence>
<evidence type="ECO:0000250" key="2">
    <source>
        <dbReference type="UniProtKB" id="Q91V04"/>
    </source>
</evidence>
<evidence type="ECO:0000255" key="3"/>
<evidence type="ECO:0000255" key="4">
    <source>
        <dbReference type="PROSITE-ProRule" id="PRU00205"/>
    </source>
</evidence>
<evidence type="ECO:0000256" key="5">
    <source>
        <dbReference type="SAM" id="MobiDB-lite"/>
    </source>
</evidence>
<evidence type="ECO:0000269" key="6">
    <source>
    </source>
</evidence>
<evidence type="ECO:0000303" key="7">
    <source>
    </source>
</evidence>
<evidence type="ECO:0000305" key="8"/>
<keyword id="KW-0903">Direct protein sequencing</keyword>
<keyword id="KW-0256">Endoplasmic reticulum</keyword>
<keyword id="KW-0325">Glycoprotein</keyword>
<keyword id="KW-0472">Membrane</keyword>
<keyword id="KW-0597">Phosphoprotein</keyword>
<keyword id="KW-0653">Protein transport</keyword>
<keyword id="KW-1185">Reference proteome</keyword>
<keyword id="KW-0811">Translocation</keyword>
<keyword id="KW-0812">Transmembrane</keyword>
<keyword id="KW-1133">Transmembrane helix</keyword>
<keyword id="KW-0813">Transport</keyword>
<feature type="initiator methionine" description="Removed" evidence="6">
    <location>
        <position position="1"/>
    </location>
</feature>
<feature type="chain" id="PRO_0000185529" description="Translocating chain-associated membrane protein 1">
    <location>
        <begin position="2"/>
        <end position="374"/>
    </location>
</feature>
<feature type="topological domain" description="Cytoplasmic" evidence="2">
    <location>
        <begin position="2"/>
        <end position="29"/>
    </location>
</feature>
<feature type="transmembrane region" description="Helical" evidence="3">
    <location>
        <begin position="30"/>
        <end position="50"/>
    </location>
</feature>
<feature type="topological domain" description="Lumenal" evidence="2">
    <location>
        <begin position="51"/>
        <end position="76"/>
    </location>
</feature>
<feature type="transmembrane region" description="Helical" evidence="3">
    <location>
        <begin position="77"/>
        <end position="97"/>
    </location>
</feature>
<feature type="topological domain" description="Cytoplasmic" evidence="2">
    <location>
        <begin position="98"/>
        <end position="121"/>
    </location>
</feature>
<feature type="transmembrane region" description="Helical" evidence="3">
    <location>
        <begin position="122"/>
        <end position="142"/>
    </location>
</feature>
<feature type="topological domain" description="Lumenal" evidence="2">
    <location>
        <begin position="143"/>
        <end position="159"/>
    </location>
</feature>
<feature type="transmembrane region" description="Helical" evidence="3">
    <location>
        <begin position="160"/>
        <end position="180"/>
    </location>
</feature>
<feature type="topological domain" description="Cytoplasmic" evidence="2">
    <location>
        <begin position="181"/>
        <end position="192"/>
    </location>
</feature>
<feature type="transmembrane region" description="Helical" evidence="3">
    <location>
        <begin position="193"/>
        <end position="213"/>
    </location>
</feature>
<feature type="topological domain" description="Lumenal" evidence="2">
    <location>
        <begin position="214"/>
        <end position="217"/>
    </location>
</feature>
<feature type="transmembrane region" description="Helical" evidence="3">
    <location>
        <begin position="218"/>
        <end position="238"/>
    </location>
</feature>
<feature type="topological domain" description="Cytoplasmic" evidence="2">
    <location>
        <begin position="239"/>
        <end position="251"/>
    </location>
</feature>
<feature type="transmembrane region" description="Helical" evidence="3">
    <location>
        <begin position="252"/>
        <end position="272"/>
    </location>
</feature>
<feature type="topological domain" description="Lumenal" evidence="2">
    <location>
        <begin position="273"/>
        <end position="297"/>
    </location>
</feature>
<feature type="transmembrane region" description="Helical" evidence="3">
    <location>
        <begin position="298"/>
        <end position="318"/>
    </location>
</feature>
<feature type="topological domain" description="Cytoplasmic" evidence="2">
    <location>
        <begin position="319"/>
        <end position="374"/>
    </location>
</feature>
<feature type="domain" description="TLC" evidence="4">
    <location>
        <begin position="117"/>
        <end position="326"/>
    </location>
</feature>
<feature type="region of interest" description="Disordered" evidence="5">
    <location>
        <begin position="334"/>
        <end position="374"/>
    </location>
</feature>
<feature type="compositionally biased region" description="Basic residues" evidence="5">
    <location>
        <begin position="334"/>
        <end position="347"/>
    </location>
</feature>
<feature type="compositionally biased region" description="Polar residues" evidence="5">
    <location>
        <begin position="352"/>
        <end position="363"/>
    </location>
</feature>
<feature type="modified residue" description="Phosphoserine" evidence="1">
    <location>
        <position position="365"/>
    </location>
</feature>
<feature type="glycosylation site" description="N-linked (GlcNAc...) asparagine" evidence="3">
    <location>
        <position position="56"/>
    </location>
</feature>
<name>TRAM1_CANLF</name>
<gene>
    <name type="primary">TRAM1</name>
    <name evidence="7" type="synonym">TRAM</name>
</gene>
<proteinExistence type="evidence at protein level"/>
<accession>Q01685</accession>
<protein>
    <recommendedName>
        <fullName evidence="1">Translocating chain-associated membrane protein 1</fullName>
        <shortName evidence="1">Protein TRAM1</shortName>
    </recommendedName>
</protein>
<organism>
    <name type="scientific">Canis lupus familiaris</name>
    <name type="common">Dog</name>
    <name type="synonym">Canis familiaris</name>
    <dbReference type="NCBI Taxonomy" id="9615"/>
    <lineage>
        <taxon>Eukaryota</taxon>
        <taxon>Metazoa</taxon>
        <taxon>Chordata</taxon>
        <taxon>Craniata</taxon>
        <taxon>Vertebrata</taxon>
        <taxon>Euteleostomi</taxon>
        <taxon>Mammalia</taxon>
        <taxon>Eutheria</taxon>
        <taxon>Laurasiatheria</taxon>
        <taxon>Carnivora</taxon>
        <taxon>Caniformia</taxon>
        <taxon>Canidae</taxon>
        <taxon>Canis</taxon>
    </lineage>
</organism>
<sequence>MAIRKKSTKSPPVLSHEFILQNHADIVSCVAMVFLLGLMFEITAKASIIFVTLQYNVTLPATEEQATESTSLYYYGIKDLATVFFYMLVAIIIHAIIQEYVLDKINRRMHFSKTKHSKFNESGQLSAFYLFSCIWGTFILISENYISDPTILWRAYPHNLMTFQMKFFYIAQLAYWFHAFPELYFQKTKKEDIPRQLVYIGLYLFHIAGAYLLNLNHLGLVLLVLHYFVEFLFHISRLFYFSDEKYQKGFSLWAVLFVLGRLLTLILSVLTVGFGLARAENQKLDFSAGNFNVLAVRIAVLASICITQAFMMWKFINFQLRRWREHSTFQAPVVKKKPTVTKGRSSRKGTENGVNGTVTSNGADSPRNRKEKSS</sequence>